<comment type="function">
    <text evidence="1">NDH-1 shuttles electrons from NADH, via FMN and iron-sulfur (Fe-S) centers, to quinones in the respiratory chain. The immediate electron acceptor for the enzyme in this species is believed to be ubiquinone. Couples the redox reaction to proton translocation (for every two electrons transferred, four hydrogen ions are translocated across the cytoplasmic membrane), and thus conserves the redox energy in a proton gradient.</text>
</comment>
<comment type="catalytic activity">
    <reaction evidence="1">
        <text>a quinone + NADH + 5 H(+)(in) = a quinol + NAD(+) + 4 H(+)(out)</text>
        <dbReference type="Rhea" id="RHEA:57888"/>
        <dbReference type="ChEBI" id="CHEBI:15378"/>
        <dbReference type="ChEBI" id="CHEBI:24646"/>
        <dbReference type="ChEBI" id="CHEBI:57540"/>
        <dbReference type="ChEBI" id="CHEBI:57945"/>
        <dbReference type="ChEBI" id="CHEBI:132124"/>
    </reaction>
</comment>
<comment type="subunit">
    <text evidence="1">NDH-1 is composed of 13 different subunits. Subunits NuoA, H, J, K, L, M, N constitute the membrane sector of the complex.</text>
</comment>
<comment type="subcellular location">
    <subcellularLocation>
        <location evidence="1">Cell inner membrane</location>
        <topology evidence="1">Multi-pass membrane protein</topology>
    </subcellularLocation>
</comment>
<comment type="similarity">
    <text evidence="1">Belongs to the complex I subunit 4L family.</text>
</comment>
<accession>Q492I5</accession>
<evidence type="ECO:0000255" key="1">
    <source>
        <dbReference type="HAMAP-Rule" id="MF_01456"/>
    </source>
</evidence>
<sequence>MIPLSHAFSLSIILFILGLIAIIVRRDLLFILLGLEIMINAAASAFVIVGSFLGQSDGQIMYILVITLSASESAVSLALLLQLYRRYHTLHIDNISEMRG</sequence>
<gene>
    <name evidence="1" type="primary">nuoK</name>
    <name type="ordered locus">BPEN_500</name>
</gene>
<reference key="1">
    <citation type="journal article" date="2005" name="Genome Res.">
        <title>Genome sequence of Blochmannia pennsylvanicus indicates parallel evolutionary trends among bacterial mutualists of insects.</title>
        <authorList>
            <person name="Degnan P.H."/>
            <person name="Lazarus A.B."/>
            <person name="Wernegreen J.J."/>
        </authorList>
    </citation>
    <scope>NUCLEOTIDE SEQUENCE [LARGE SCALE GENOMIC DNA]</scope>
    <source>
        <strain>BPEN</strain>
    </source>
</reference>
<name>NUOK_BLOPB</name>
<organism>
    <name type="scientific">Blochmanniella pennsylvanica (strain BPEN)</name>
    <dbReference type="NCBI Taxonomy" id="291272"/>
    <lineage>
        <taxon>Bacteria</taxon>
        <taxon>Pseudomonadati</taxon>
        <taxon>Pseudomonadota</taxon>
        <taxon>Gammaproteobacteria</taxon>
        <taxon>Enterobacterales</taxon>
        <taxon>Enterobacteriaceae</taxon>
        <taxon>ant endosymbionts</taxon>
        <taxon>Candidatus Blochmanniella</taxon>
    </lineage>
</organism>
<feature type="chain" id="PRO_0000389961" description="NADH-quinone oxidoreductase subunit K">
    <location>
        <begin position="1"/>
        <end position="100"/>
    </location>
</feature>
<feature type="transmembrane region" description="Helical" evidence="1">
    <location>
        <begin position="4"/>
        <end position="24"/>
    </location>
</feature>
<feature type="transmembrane region" description="Helical" evidence="1">
    <location>
        <begin position="29"/>
        <end position="49"/>
    </location>
</feature>
<feature type="transmembrane region" description="Helical" evidence="1">
    <location>
        <begin position="60"/>
        <end position="80"/>
    </location>
</feature>
<keyword id="KW-0997">Cell inner membrane</keyword>
<keyword id="KW-1003">Cell membrane</keyword>
<keyword id="KW-0472">Membrane</keyword>
<keyword id="KW-0520">NAD</keyword>
<keyword id="KW-0874">Quinone</keyword>
<keyword id="KW-1185">Reference proteome</keyword>
<keyword id="KW-1278">Translocase</keyword>
<keyword id="KW-0812">Transmembrane</keyword>
<keyword id="KW-1133">Transmembrane helix</keyword>
<keyword id="KW-0813">Transport</keyword>
<keyword id="KW-0830">Ubiquinone</keyword>
<proteinExistence type="inferred from homology"/>
<protein>
    <recommendedName>
        <fullName evidence="1">NADH-quinone oxidoreductase subunit K</fullName>
        <ecNumber evidence="1">7.1.1.-</ecNumber>
    </recommendedName>
    <alternativeName>
        <fullName evidence="1">NADH dehydrogenase I subunit K</fullName>
    </alternativeName>
    <alternativeName>
        <fullName evidence="1">NDH-1 subunit K</fullName>
    </alternativeName>
</protein>
<dbReference type="EC" id="7.1.1.-" evidence="1"/>
<dbReference type="EMBL" id="CP000016">
    <property type="protein sequence ID" value="AAZ41114.1"/>
    <property type="molecule type" value="Genomic_DNA"/>
</dbReference>
<dbReference type="RefSeq" id="WP_011283025.1">
    <property type="nucleotide sequence ID" value="NC_007292.1"/>
</dbReference>
<dbReference type="SMR" id="Q492I5"/>
<dbReference type="STRING" id="291272.BPEN_500"/>
<dbReference type="KEGG" id="bpn:BPEN_500"/>
<dbReference type="eggNOG" id="COG0713">
    <property type="taxonomic scope" value="Bacteria"/>
</dbReference>
<dbReference type="HOGENOM" id="CLU_144724_0_1_6"/>
<dbReference type="OrthoDB" id="9801357at2"/>
<dbReference type="Proteomes" id="UP000007794">
    <property type="component" value="Chromosome"/>
</dbReference>
<dbReference type="GO" id="GO:0030964">
    <property type="term" value="C:NADH dehydrogenase complex"/>
    <property type="evidence" value="ECO:0007669"/>
    <property type="project" value="TreeGrafter"/>
</dbReference>
<dbReference type="GO" id="GO:0005886">
    <property type="term" value="C:plasma membrane"/>
    <property type="evidence" value="ECO:0007669"/>
    <property type="project" value="UniProtKB-SubCell"/>
</dbReference>
<dbReference type="GO" id="GO:0050136">
    <property type="term" value="F:NADH:ubiquinone reductase (non-electrogenic) activity"/>
    <property type="evidence" value="ECO:0007669"/>
    <property type="project" value="UniProtKB-UniRule"/>
</dbReference>
<dbReference type="GO" id="GO:0048038">
    <property type="term" value="F:quinone binding"/>
    <property type="evidence" value="ECO:0007669"/>
    <property type="project" value="UniProtKB-KW"/>
</dbReference>
<dbReference type="GO" id="GO:0042773">
    <property type="term" value="P:ATP synthesis coupled electron transport"/>
    <property type="evidence" value="ECO:0007669"/>
    <property type="project" value="InterPro"/>
</dbReference>
<dbReference type="FunFam" id="1.10.287.3510:FF:000001">
    <property type="entry name" value="NADH-quinone oxidoreductase subunit K"/>
    <property type="match status" value="1"/>
</dbReference>
<dbReference type="Gene3D" id="1.10.287.3510">
    <property type="match status" value="1"/>
</dbReference>
<dbReference type="HAMAP" id="MF_01456">
    <property type="entry name" value="NDH1_NuoK"/>
    <property type="match status" value="1"/>
</dbReference>
<dbReference type="InterPro" id="IPR001133">
    <property type="entry name" value="NADH_UbQ_OxRdtase_chain4L/K"/>
</dbReference>
<dbReference type="InterPro" id="IPR039428">
    <property type="entry name" value="NUOK/Mnh_C1-like"/>
</dbReference>
<dbReference type="NCBIfam" id="NF004319">
    <property type="entry name" value="PRK05715.1-1"/>
    <property type="match status" value="1"/>
</dbReference>
<dbReference type="NCBIfam" id="NF004320">
    <property type="entry name" value="PRK05715.1-2"/>
    <property type="match status" value="1"/>
</dbReference>
<dbReference type="PANTHER" id="PTHR11434:SF16">
    <property type="entry name" value="NADH-UBIQUINONE OXIDOREDUCTASE CHAIN 4L"/>
    <property type="match status" value="1"/>
</dbReference>
<dbReference type="PANTHER" id="PTHR11434">
    <property type="entry name" value="NADH-UBIQUINONE OXIDOREDUCTASE SUBUNIT ND4L"/>
    <property type="match status" value="1"/>
</dbReference>
<dbReference type="Pfam" id="PF00420">
    <property type="entry name" value="Oxidored_q2"/>
    <property type="match status" value="1"/>
</dbReference>